<organism>
    <name type="scientific">Cenarchaeum symbiosum (strain A)</name>
    <dbReference type="NCBI Taxonomy" id="414004"/>
    <lineage>
        <taxon>Archaea</taxon>
        <taxon>Nitrososphaerota</taxon>
        <taxon>Candidatus Cenarchaeales</taxon>
        <taxon>Candidatus Cenarchaeaceae</taxon>
        <taxon>Candidatus Cenarchaeum</taxon>
    </lineage>
</organism>
<protein>
    <recommendedName>
        <fullName evidence="1">Sec-independent protein translocase protein TatC</fullName>
    </recommendedName>
</protein>
<proteinExistence type="inferred from homology"/>
<accession>A0RW14</accession>
<feature type="chain" id="PRO_0000412873" description="Sec-independent protein translocase protein TatC">
    <location>
        <begin position="1"/>
        <end position="264"/>
    </location>
</feature>
<feature type="transmembrane region" description="Helical" evidence="1">
    <location>
        <begin position="20"/>
        <end position="40"/>
    </location>
</feature>
<feature type="transmembrane region" description="Helical" evidence="1">
    <location>
        <begin position="85"/>
        <end position="105"/>
    </location>
</feature>
<feature type="transmembrane region" description="Helical" evidence="1">
    <location>
        <begin position="131"/>
        <end position="151"/>
    </location>
</feature>
<feature type="transmembrane region" description="Helical" evidence="1">
    <location>
        <begin position="175"/>
        <end position="195"/>
    </location>
</feature>
<feature type="transmembrane region" description="Helical" evidence="1">
    <location>
        <begin position="211"/>
        <end position="231"/>
    </location>
</feature>
<feature type="transmembrane region" description="Helical" evidence="1">
    <location>
        <begin position="232"/>
        <end position="252"/>
    </location>
</feature>
<evidence type="ECO:0000255" key="1">
    <source>
        <dbReference type="HAMAP-Rule" id="MF_00902"/>
    </source>
</evidence>
<gene>
    <name evidence="1" type="primary">tatC</name>
    <name type="ordered locus">CENSYa_0899</name>
</gene>
<name>TATC_CENSY</name>
<keyword id="KW-1003">Cell membrane</keyword>
<keyword id="KW-0472">Membrane</keyword>
<keyword id="KW-0653">Protein transport</keyword>
<keyword id="KW-1185">Reference proteome</keyword>
<keyword id="KW-0811">Translocation</keyword>
<keyword id="KW-0812">Transmembrane</keyword>
<keyword id="KW-1133">Transmembrane helix</keyword>
<keyword id="KW-0813">Transport</keyword>
<dbReference type="EMBL" id="DP000238">
    <property type="protein sequence ID" value="ABK77531.1"/>
    <property type="molecule type" value="Genomic_DNA"/>
</dbReference>
<dbReference type="SMR" id="A0RW14"/>
<dbReference type="STRING" id="414004.CENSYa_0899"/>
<dbReference type="EnsemblBacteria" id="ABK77531">
    <property type="protein sequence ID" value="ABK77531"/>
    <property type="gene ID" value="CENSYa_0899"/>
</dbReference>
<dbReference type="KEGG" id="csy:CENSYa_0899"/>
<dbReference type="PATRIC" id="fig|414004.10.peg.830"/>
<dbReference type="HOGENOM" id="CLU_031942_3_2_2"/>
<dbReference type="Proteomes" id="UP000000758">
    <property type="component" value="Chromosome"/>
</dbReference>
<dbReference type="GO" id="GO:0033281">
    <property type="term" value="C:TAT protein transport complex"/>
    <property type="evidence" value="ECO:0007669"/>
    <property type="project" value="UniProtKB-UniRule"/>
</dbReference>
<dbReference type="GO" id="GO:0009977">
    <property type="term" value="F:proton motive force dependent protein transmembrane transporter activity"/>
    <property type="evidence" value="ECO:0007669"/>
    <property type="project" value="TreeGrafter"/>
</dbReference>
<dbReference type="GO" id="GO:0065002">
    <property type="term" value="P:intracellular protein transmembrane transport"/>
    <property type="evidence" value="ECO:0007669"/>
    <property type="project" value="TreeGrafter"/>
</dbReference>
<dbReference type="GO" id="GO:0043953">
    <property type="term" value="P:protein transport by the Tat complex"/>
    <property type="evidence" value="ECO:0007669"/>
    <property type="project" value="UniProtKB-UniRule"/>
</dbReference>
<dbReference type="HAMAP" id="MF_00902">
    <property type="entry name" value="TatC"/>
    <property type="match status" value="1"/>
</dbReference>
<dbReference type="InterPro" id="IPR002033">
    <property type="entry name" value="TatC"/>
</dbReference>
<dbReference type="NCBIfam" id="TIGR00945">
    <property type="entry name" value="tatC"/>
    <property type="match status" value="1"/>
</dbReference>
<dbReference type="PANTHER" id="PTHR30371">
    <property type="entry name" value="SEC-INDEPENDENT PROTEIN TRANSLOCASE PROTEIN TATC"/>
    <property type="match status" value="1"/>
</dbReference>
<dbReference type="PANTHER" id="PTHR30371:SF0">
    <property type="entry name" value="SEC-INDEPENDENT PROTEIN TRANSLOCASE PROTEIN TATC, CHLOROPLASTIC-RELATED"/>
    <property type="match status" value="1"/>
</dbReference>
<dbReference type="Pfam" id="PF00902">
    <property type="entry name" value="TatC"/>
    <property type="match status" value="1"/>
</dbReference>
<dbReference type="PRINTS" id="PR01840">
    <property type="entry name" value="TATCFAMILY"/>
</dbReference>
<comment type="function">
    <text evidence="1">Part of the twin-arginine translocation (Tat) system that transports large folded proteins containing a characteristic twin-arginine motif in their signal peptide across membranes.</text>
</comment>
<comment type="subunit">
    <text evidence="1">Forms a complex with TatA.</text>
</comment>
<comment type="subcellular location">
    <subcellularLocation>
        <location evidence="1">Cell membrane</location>
        <topology evidence="1">Multi-pass membrane protein</topology>
    </subcellularLocation>
</comment>
<comment type="similarity">
    <text evidence="1">Belongs to the TatC family.</text>
</comment>
<reference key="1">
    <citation type="journal article" date="2006" name="Proc. Natl. Acad. Sci. U.S.A.">
        <title>Genomic analysis of the uncultivated marine crenarchaeote Cenarchaeum symbiosum.</title>
        <authorList>
            <person name="Hallam S.J."/>
            <person name="Konstantinidis K.T."/>
            <person name="Putnam N."/>
            <person name="Schleper C."/>
            <person name="Watanabe Y."/>
            <person name="Sugahara J."/>
            <person name="Preston C."/>
            <person name="de la Torre J."/>
            <person name="Richardson P.M."/>
            <person name="DeLong E.F."/>
        </authorList>
    </citation>
    <scope>NUCLEOTIDE SEQUENCE [LARGE SCALE GENOMIC DNA]</scope>
    <source>
        <strain>A</strain>
    </source>
</reference>
<sequence>MSEMQFGKHLDELRRRALRVVVITGAVTAFLLAFHAEPAELWGATVYYPVPDPLHNMAAQITDHMRAALVPEGVELIQTTPGQAFFAQVYIAALVGVTVSTPVAVRELAAFLRPALRESEIHVGRSISAPAVGLFAAGCAFSYIVVIPYILDFLYKIGESAGITTFLNVMDFVSFVLQFLLAFGISFQLPLVMFAVTASGMVDGRFWRRNIRYALLGIVIFGAAITPDGSGVTMWFVAGPMIGLYFAGMFFAERRERKEKSAGA</sequence>